<dbReference type="PIR" id="S07231">
    <property type="entry name" value="GIBO"/>
</dbReference>
<dbReference type="SMR" id="P09680"/>
<dbReference type="STRING" id="9913.ENSBTAP00000006656"/>
<dbReference type="PaxDb" id="9913-ENSBTAP00000006656"/>
<dbReference type="eggNOG" id="ENOG502S7ZH">
    <property type="taxonomic scope" value="Eukaryota"/>
</dbReference>
<dbReference type="HOGENOM" id="CLU_146415_0_0_1"/>
<dbReference type="InParanoid" id="P09680"/>
<dbReference type="Proteomes" id="UP000009136">
    <property type="component" value="Unplaced"/>
</dbReference>
<dbReference type="GO" id="GO:0005576">
    <property type="term" value="C:extracellular region"/>
    <property type="evidence" value="ECO:0007669"/>
    <property type="project" value="UniProtKB-SubCell"/>
</dbReference>
<dbReference type="GO" id="GO:0005179">
    <property type="term" value="F:hormone activity"/>
    <property type="evidence" value="ECO:0007669"/>
    <property type="project" value="UniProtKB-KW"/>
</dbReference>
<dbReference type="GO" id="GO:0042304">
    <property type="term" value="P:regulation of fatty acid biosynthetic process"/>
    <property type="evidence" value="ECO:0007669"/>
    <property type="project" value="InterPro"/>
</dbReference>
<dbReference type="GO" id="GO:0050796">
    <property type="term" value="P:regulation of insulin secretion"/>
    <property type="evidence" value="ECO:0007669"/>
    <property type="project" value="InterPro"/>
</dbReference>
<dbReference type="GO" id="GO:0009749">
    <property type="term" value="P:response to glucose"/>
    <property type="evidence" value="ECO:0007669"/>
    <property type="project" value="InterPro"/>
</dbReference>
<dbReference type="Gene3D" id="6.10.250.590">
    <property type="match status" value="1"/>
</dbReference>
<dbReference type="InterPro" id="IPR039078">
    <property type="entry name" value="GIP"/>
</dbReference>
<dbReference type="InterPro" id="IPR000532">
    <property type="entry name" value="Glucagon_GIP_secretin_VIP"/>
</dbReference>
<dbReference type="PANTHER" id="PTHR15211:SF0">
    <property type="entry name" value="GASTRIC INHIBITORY POLYPEPTIDE"/>
    <property type="match status" value="1"/>
</dbReference>
<dbReference type="PANTHER" id="PTHR15211">
    <property type="entry name" value="GLUCOSE-DEPENDENT INSULINOTROPIC POLYPEPTIDE"/>
    <property type="match status" value="1"/>
</dbReference>
<dbReference type="Pfam" id="PF00123">
    <property type="entry name" value="Hormone_2"/>
    <property type="match status" value="1"/>
</dbReference>
<dbReference type="SMART" id="SM00070">
    <property type="entry name" value="GLUCA"/>
    <property type="match status" value="1"/>
</dbReference>
<dbReference type="PROSITE" id="PS00260">
    <property type="entry name" value="GLUCAGON"/>
    <property type="match status" value="1"/>
</dbReference>
<protein>
    <recommendedName>
        <fullName>Gastric inhibitory polypeptide</fullName>
        <shortName>GIP</shortName>
    </recommendedName>
    <alternativeName>
        <fullName>Glucose-dependent insulinotropic polypeptide</fullName>
    </alternativeName>
</protein>
<proteinExistence type="evidence at protein level"/>
<keyword id="KW-0903">Direct protein sequencing</keyword>
<keyword id="KW-0372">Hormone</keyword>
<keyword id="KW-1185">Reference proteome</keyword>
<keyword id="KW-0964">Secreted</keyword>
<sequence>YAEGTFISDYSIAMDKIRQQDFVNWLLAQKGKKSDWIHNITQ</sequence>
<evidence type="ECO:0000305" key="1"/>
<organism>
    <name type="scientific">Bos taurus</name>
    <name type="common">Bovine</name>
    <dbReference type="NCBI Taxonomy" id="9913"/>
    <lineage>
        <taxon>Eukaryota</taxon>
        <taxon>Metazoa</taxon>
        <taxon>Chordata</taxon>
        <taxon>Craniata</taxon>
        <taxon>Vertebrata</taxon>
        <taxon>Euteleostomi</taxon>
        <taxon>Mammalia</taxon>
        <taxon>Eutheria</taxon>
        <taxon>Laurasiatheria</taxon>
        <taxon>Artiodactyla</taxon>
        <taxon>Ruminantia</taxon>
        <taxon>Pecora</taxon>
        <taxon>Bovidae</taxon>
        <taxon>Bovinae</taxon>
        <taxon>Bos</taxon>
    </lineage>
</organism>
<reference key="1">
    <citation type="journal article" date="1984" name="Eur. J. Biochem.">
        <title>A novel form of gastric inhibitory polypeptide (GIP) isolated from bovine intestine using a radioreceptor assay. Fragmentation with staphylococcal protease results in GIP1-3 and GIP4-42, fragmentation with enterokinase in GIP1-16 and GIP17-42.</title>
        <authorList>
            <person name="Carlquist M."/>
            <person name="Maletti M."/>
            <person name="Joernvall H."/>
            <person name="Mutt V."/>
        </authorList>
    </citation>
    <scope>PROTEIN SEQUENCE</scope>
</reference>
<feature type="chain" id="PRO_0000148918" description="Gastric inhibitory polypeptide">
    <location>
        <begin position="1"/>
        <end position="42"/>
    </location>
</feature>
<gene>
    <name type="primary">GIP</name>
</gene>
<comment type="function">
    <text>Potent stimulator of insulin secretion and relatively poor inhibitor of gastric acid secretion.</text>
</comment>
<comment type="subcellular location">
    <subcellularLocation>
        <location>Secreted</location>
    </subcellularLocation>
</comment>
<comment type="similarity">
    <text evidence="1">Belongs to the glucagon family.</text>
</comment>
<accession>P09680</accession>
<name>GIP_BOVIN</name>